<protein>
    <recommendedName>
        <fullName>D-threo-3-hydroxyaspartate dehydratase</fullName>
        <shortName>D-THA DH</shortName>
        <shortName>D-THA dehydratase</shortName>
        <ecNumber>4.3.1.27</ecNumber>
    </recommendedName>
    <alternativeName>
        <fullName>Threo-3-hydroxy-D-aspartate ammonia-lyase</fullName>
    </alternativeName>
</protein>
<evidence type="ECO:0000269" key="1">
    <source>
    </source>
</evidence>
<evidence type="ECO:0000305" key="2"/>
<evidence type="ECO:0007829" key="3">
    <source>
        <dbReference type="PDB" id="3WQC"/>
    </source>
</evidence>
<evidence type="ECO:0007829" key="4">
    <source>
        <dbReference type="PDB" id="4PB5"/>
    </source>
</evidence>
<dbReference type="EC" id="4.3.1.27"/>
<dbReference type="EMBL" id="AB433986">
    <property type="protein sequence ID" value="BAG24498.1"/>
    <property type="molecule type" value="Genomic_DNA"/>
</dbReference>
<dbReference type="PDB" id="3WQC">
    <property type="method" value="X-ray"/>
    <property type="resolution" value="1.50 A"/>
    <property type="chains" value="A/B=1-380"/>
</dbReference>
<dbReference type="PDB" id="3WQD">
    <property type="method" value="X-ray"/>
    <property type="resolution" value="1.50 A"/>
    <property type="chains" value="A/B=1-380"/>
</dbReference>
<dbReference type="PDB" id="3WQE">
    <property type="method" value="X-ray"/>
    <property type="resolution" value="1.60 A"/>
    <property type="chains" value="A/B=1-380"/>
</dbReference>
<dbReference type="PDB" id="3WQF">
    <property type="method" value="X-ray"/>
    <property type="resolution" value="2.30 A"/>
    <property type="chains" value="A/B=1-380"/>
</dbReference>
<dbReference type="PDB" id="3WQG">
    <property type="method" value="X-ray"/>
    <property type="resolution" value="1.55 A"/>
    <property type="chains" value="A/B=1-380"/>
</dbReference>
<dbReference type="PDB" id="4PB3">
    <property type="method" value="X-ray"/>
    <property type="resolution" value="1.70 A"/>
    <property type="chains" value="A/B=1-380"/>
</dbReference>
<dbReference type="PDB" id="4PB4">
    <property type="method" value="X-ray"/>
    <property type="resolution" value="1.80 A"/>
    <property type="chains" value="A/B=1-380"/>
</dbReference>
<dbReference type="PDB" id="4PB5">
    <property type="method" value="X-ray"/>
    <property type="resolution" value="1.90 A"/>
    <property type="chains" value="A/B=1-380"/>
</dbReference>
<dbReference type="PDBsum" id="3WQC"/>
<dbReference type="PDBsum" id="3WQD"/>
<dbReference type="PDBsum" id="3WQE"/>
<dbReference type="PDBsum" id="3WQF"/>
<dbReference type="PDBsum" id="3WQG"/>
<dbReference type="PDBsum" id="4PB3"/>
<dbReference type="PDBsum" id="4PB4"/>
<dbReference type="PDBsum" id="4PB5"/>
<dbReference type="SMR" id="B2DFG5"/>
<dbReference type="KEGG" id="ag:BAG24498"/>
<dbReference type="BioCyc" id="MetaCyc:MONOMER-15942"/>
<dbReference type="BRENDA" id="4.3.1.27">
    <property type="organism ID" value="12512"/>
</dbReference>
<dbReference type="SABIO-RK" id="B2DFG5"/>
<dbReference type="EvolutionaryTrace" id="B2DFG5"/>
<dbReference type="GO" id="GO:0016841">
    <property type="term" value="F:ammonia-lyase activity"/>
    <property type="evidence" value="ECO:0000314"/>
    <property type="project" value="UniProtKB"/>
</dbReference>
<dbReference type="GO" id="GO:0008721">
    <property type="term" value="F:D-serine ammonia-lyase activity"/>
    <property type="evidence" value="ECO:0007669"/>
    <property type="project" value="TreeGrafter"/>
</dbReference>
<dbReference type="GO" id="GO:0030170">
    <property type="term" value="F:pyridoxal phosphate binding"/>
    <property type="evidence" value="ECO:0000315"/>
    <property type="project" value="UniProtKB"/>
</dbReference>
<dbReference type="GO" id="GO:0036088">
    <property type="term" value="P:D-serine catabolic process"/>
    <property type="evidence" value="ECO:0007669"/>
    <property type="project" value="TreeGrafter"/>
</dbReference>
<dbReference type="CDD" id="cd06812">
    <property type="entry name" value="PLPDE_III_DSD_D-TA_like_1"/>
    <property type="match status" value="1"/>
</dbReference>
<dbReference type="Gene3D" id="3.20.20.10">
    <property type="entry name" value="Alanine racemase"/>
    <property type="match status" value="1"/>
</dbReference>
<dbReference type="Gene3D" id="2.40.37.20">
    <property type="entry name" value="D-serine dehydratase-like domain"/>
    <property type="match status" value="1"/>
</dbReference>
<dbReference type="InterPro" id="IPR001608">
    <property type="entry name" value="Ala_racemase_N"/>
</dbReference>
<dbReference type="InterPro" id="IPR051466">
    <property type="entry name" value="D-amino_acid_metab_enzyme"/>
</dbReference>
<dbReference type="InterPro" id="IPR026956">
    <property type="entry name" value="D-ser_dehydrat-like_dom"/>
</dbReference>
<dbReference type="InterPro" id="IPR042208">
    <property type="entry name" value="D-ser_dehydrat-like_sf"/>
</dbReference>
<dbReference type="InterPro" id="IPR029066">
    <property type="entry name" value="PLP-binding_barrel"/>
</dbReference>
<dbReference type="PANTHER" id="PTHR28004:SF2">
    <property type="entry name" value="D-SERINE DEHYDRATASE"/>
    <property type="match status" value="1"/>
</dbReference>
<dbReference type="PANTHER" id="PTHR28004">
    <property type="entry name" value="ZGC:162816-RELATED"/>
    <property type="match status" value="1"/>
</dbReference>
<dbReference type="Pfam" id="PF01168">
    <property type="entry name" value="Ala_racemase_N"/>
    <property type="match status" value="1"/>
</dbReference>
<dbReference type="Pfam" id="PF14031">
    <property type="entry name" value="D-ser_dehydrat"/>
    <property type="match status" value="1"/>
</dbReference>
<dbReference type="SMART" id="SM01119">
    <property type="entry name" value="D-ser_dehydrat"/>
    <property type="match status" value="1"/>
</dbReference>
<dbReference type="SUPFAM" id="SSF51419">
    <property type="entry name" value="PLP-binding barrel"/>
    <property type="match status" value="1"/>
</dbReference>
<organism>
    <name type="scientific">Delftia sp. (strain HT23)</name>
    <dbReference type="NCBI Taxonomy" id="518882"/>
    <lineage>
        <taxon>Bacteria</taxon>
        <taxon>Pseudomonadati</taxon>
        <taxon>Pseudomonadota</taxon>
        <taxon>Betaproteobacteria</taxon>
        <taxon>Burkholderiales</taxon>
        <taxon>Comamonadaceae</taxon>
        <taxon>Delftia</taxon>
    </lineage>
</organism>
<accession>B2DFG5</accession>
<proteinExistence type="evidence at protein level"/>
<reference key="1">
    <citation type="journal article" date="2010" name="J. Biochem.">
        <title>Purification, characterization and amino acid sequence of a novel enzyme, D-threo-3-hydroxyaspartate dehydratase, from Delftia sp. HT23.</title>
        <authorList>
            <person name="Maeda T."/>
            <person name="Takeda Y."/>
            <person name="Murakami T."/>
            <person name="Yokota A."/>
            <person name="Wada M."/>
        </authorList>
    </citation>
    <scope>NUCLEOTIDE SEQUENCE [GENOMIC DNA]</scope>
    <scope>PROTEIN SEQUENCE OF 1-25 AND 285-293</scope>
    <scope>FUNCTION</scope>
    <scope>CATALYTIC ACTIVITY</scope>
    <scope>COFACTOR</scope>
    <scope>ACTIVITY REGULATION</scope>
    <scope>BIOPHYSICOCHEMICAL PROPERTIES</scope>
    <scope>SUBUNIT</scope>
    <scope>MUTAGENESIS OF LYS-43</scope>
    <source>
        <strain>HT23</strain>
    </source>
</reference>
<comment type="function">
    <text evidence="1">Catalyzes the deamination of D-threo-3-hydroxyaspartate (D-THA). Also exhibits dehydratase activity towards L-threo-3-hydroxyaspartate (L-THA), L-erythro-3-hydroxyaspartate (L-EHA) and D-serine.</text>
</comment>
<comment type="catalytic activity">
    <reaction evidence="1">
        <text>(3R)-3-hydroxy-D-aspartate = oxaloacetate + NH4(+)</text>
        <dbReference type="Rhea" id="RHEA:27942"/>
        <dbReference type="ChEBI" id="CHEBI:16452"/>
        <dbReference type="ChEBI" id="CHEBI:28938"/>
        <dbReference type="ChEBI" id="CHEBI:60898"/>
        <dbReference type="EC" id="4.3.1.27"/>
    </reaction>
</comment>
<comment type="cofactor">
    <cofactor evidence="1">
        <name>pyridoxal 5'-phosphate</name>
        <dbReference type="ChEBI" id="CHEBI:597326"/>
    </cofactor>
</comment>
<comment type="cofactor">
    <cofactor evidence="1">
        <name>Mn(2+)</name>
        <dbReference type="ChEBI" id="CHEBI:29035"/>
    </cofactor>
    <cofactor evidence="1">
        <name>Co(2+)</name>
        <dbReference type="ChEBI" id="CHEBI:48828"/>
    </cofactor>
    <cofactor evidence="1">
        <name>Ni(2+)</name>
        <dbReference type="ChEBI" id="CHEBI:49786"/>
    </cofactor>
    <text evidence="1">Divalent metal ions, such as manganese, cobalt and nickel.</text>
</comment>
<comment type="activity regulation">
    <text evidence="1">Strongly inhibited by hydroxylamine. Modestly inhibited by EDTA.</text>
</comment>
<comment type="biophysicochemical properties">
    <kinetics>
        <KM evidence="1">0.42 mM for D-THA</KM>
        <KM evidence="1">6.16 mM for L-THA</KM>
        <KM evidence="1">0.16 mM for L-EHA</KM>
        <KM evidence="1">0.15 mM for D-serine</KM>
        <text>kcat is 10.93 sec(-1) for D-THA. kcat is 3.03 sec(-1) for L-THA. kcat is 8.68 sec(-1) for L-EHA. kcat is 0.89 sec(-1) for D-serine.</text>
    </kinetics>
    <phDependence>
        <text evidence="1">Optimum pH is 8.5.</text>
    </phDependence>
    <temperatureDependence>
        <text evidence="1">Optimum temperature is 50 degrees Celsius.</text>
    </temperatureDependence>
</comment>
<comment type="subunit">
    <text evidence="1">Monomer.</text>
</comment>
<comment type="similarity">
    <text evidence="2">Belongs to the DSD1 family.</text>
</comment>
<feature type="chain" id="PRO_0000418669" description="D-threo-3-hydroxyaspartate dehydratase">
    <location>
        <begin position="1"/>
        <end position="380"/>
    </location>
</feature>
<feature type="modified residue" description="N6-(pyridoxal phosphate)lysine" evidence="2">
    <location>
        <position position="43"/>
    </location>
</feature>
<feature type="mutagenesis site" description="Loss of activity." evidence="1">
    <original>K</original>
    <variation>A</variation>
    <location>
        <position position="43"/>
    </location>
</feature>
<feature type="turn" evidence="3">
    <location>
        <begin position="5"/>
        <end position="7"/>
    </location>
</feature>
<feature type="strand" evidence="3">
    <location>
        <begin position="10"/>
        <end position="16"/>
    </location>
</feature>
<feature type="helix" evidence="3">
    <location>
        <begin position="17"/>
        <end position="34"/>
    </location>
</feature>
<feature type="strand" evidence="4">
    <location>
        <begin position="37"/>
        <end position="41"/>
    </location>
</feature>
<feature type="helix" evidence="3">
    <location>
        <begin position="42"/>
        <end position="44"/>
    </location>
</feature>
<feature type="helix" evidence="3">
    <location>
        <begin position="48"/>
        <end position="56"/>
    </location>
</feature>
<feature type="strand" evidence="3">
    <location>
        <begin position="61"/>
        <end position="66"/>
    </location>
</feature>
<feature type="helix" evidence="3">
    <location>
        <begin position="67"/>
        <end position="75"/>
    </location>
</feature>
<feature type="strand" evidence="3">
    <location>
        <begin position="80"/>
        <end position="83"/>
    </location>
</feature>
<feature type="helix" evidence="3">
    <location>
        <begin position="89"/>
        <end position="91"/>
    </location>
</feature>
<feature type="helix" evidence="3">
    <location>
        <begin position="92"/>
        <end position="100"/>
    </location>
</feature>
<feature type="strand" evidence="3">
    <location>
        <begin position="104"/>
        <end position="109"/>
    </location>
</feature>
<feature type="helix" evidence="3">
    <location>
        <begin position="112"/>
        <end position="125"/>
    </location>
</feature>
<feature type="strand" evidence="3">
    <location>
        <begin position="130"/>
        <end position="145"/>
    </location>
</feature>
<feature type="helix" evidence="3">
    <location>
        <begin position="149"/>
        <end position="161"/>
    </location>
</feature>
<feature type="strand" evidence="3">
    <location>
        <begin position="165"/>
        <end position="170"/>
    </location>
</feature>
<feature type="helix" evidence="3">
    <location>
        <begin position="174"/>
        <end position="178"/>
    </location>
</feature>
<feature type="helix" evidence="3">
    <location>
        <begin position="182"/>
        <end position="205"/>
    </location>
</feature>
<feature type="strand" evidence="3">
    <location>
        <begin position="212"/>
        <end position="215"/>
    </location>
</feature>
<feature type="helix" evidence="3">
    <location>
        <begin position="218"/>
        <end position="223"/>
    </location>
</feature>
<feature type="strand" evidence="4">
    <location>
        <begin position="232"/>
        <end position="235"/>
    </location>
</feature>
<feature type="helix" evidence="3">
    <location>
        <begin position="237"/>
        <end position="239"/>
    </location>
</feature>
<feature type="helix" evidence="3">
    <location>
        <begin position="243"/>
        <end position="248"/>
    </location>
</feature>
<feature type="helix" evidence="3">
    <location>
        <begin position="253"/>
        <end position="255"/>
    </location>
</feature>
<feature type="strand" evidence="3">
    <location>
        <begin position="258"/>
        <end position="268"/>
    </location>
</feature>
<feature type="helix" evidence="3">
    <location>
        <begin position="269"/>
        <end position="271"/>
    </location>
</feature>
<feature type="strand" evidence="3">
    <location>
        <begin position="273"/>
        <end position="277"/>
    </location>
</feature>
<feature type="helix" evidence="3">
    <location>
        <begin position="280"/>
        <end position="283"/>
    </location>
</feature>
<feature type="helix" evidence="3">
    <location>
        <begin position="288"/>
        <end position="291"/>
    </location>
</feature>
<feature type="strand" evidence="3">
    <location>
        <begin position="292"/>
        <end position="294"/>
    </location>
</feature>
<feature type="strand" evidence="3">
    <location>
        <begin position="300"/>
        <end position="302"/>
    </location>
</feature>
<feature type="strand" evidence="3">
    <location>
        <begin position="308"/>
        <end position="317"/>
    </location>
</feature>
<feature type="strand" evidence="3">
    <location>
        <begin position="322"/>
        <end position="326"/>
    </location>
</feature>
<feature type="helix" evidence="3">
    <location>
        <begin position="335"/>
        <end position="338"/>
    </location>
</feature>
<feature type="strand" evidence="3">
    <location>
        <begin position="344"/>
        <end position="348"/>
    </location>
</feature>
<feature type="helix" evidence="3">
    <location>
        <begin position="352"/>
        <end position="357"/>
    </location>
</feature>
<feature type="strand" evidence="3">
    <location>
        <begin position="360"/>
        <end position="365"/>
    </location>
</feature>
<feature type="strand" evidence="3">
    <location>
        <begin position="369"/>
        <end position="375"/>
    </location>
</feature>
<sequence length="380" mass="40329">MQDTLLTLDTPAAVIDLDRMQRNIARMQQRMDAQGVRLRPHVKTSKSVPVAAAQRAAGASGITVSTLKEAEQFFAAGTTDILYAVSMAPHRLPQALQLRRRGCDLKLIVDSVAAAQAIAAFGREQGEAFEVWIEIDTDGHRSGVGADDTPLLLAIGRTLHDGGMRLGGVLTHAGSSYELDTPEALQALAERERAGCVQAAEALRAAGLPCPVVSVGSTPTALAASRLDGVTEVRAGVYVFFDLVMRNIGVCAAEDVALSVLATVIGHQADKGWAIVDAGWMAMSRDRGTARQKQDFGYGQVCDLQGRVMPGFVLTGANQEHGILARADGAAEADIATRFPLGTRLRILPNHACATGAQFPAYQALAADGSVQTWERLHGW</sequence>
<name>DTHAD_DELSH</name>
<keyword id="KW-0002">3D-structure</keyword>
<keyword id="KW-0170">Cobalt</keyword>
<keyword id="KW-0903">Direct protein sequencing</keyword>
<keyword id="KW-0456">Lyase</keyword>
<keyword id="KW-0464">Manganese</keyword>
<keyword id="KW-0533">Nickel</keyword>
<keyword id="KW-0663">Pyridoxal phosphate</keyword>
<gene>
    <name type="primary">dthadh</name>
</gene>